<sequence length="139" mass="15003">MGVFHVDIVSAEESIYSGPAEFLVAPAEGGEVGIYPQHTPMLTRIKPGSVRIKAPLKEEELVYVSGGMLEIQPDIVTILADTAVRGADLDEAKAIEAKKHAEEAVRDRASTLDYARAQAELSEAIAQLAAIQKLRKRGH</sequence>
<name>ATPE_NITMU</name>
<comment type="function">
    <text evidence="1">Produces ATP from ADP in the presence of a proton gradient across the membrane.</text>
</comment>
<comment type="subunit">
    <text>F-type ATPases have 2 components, CF(1) - the catalytic core - and CF(0) - the membrane proton channel. CF(1) has five subunits: alpha(3), beta(3), gamma(1), delta(1), epsilon(1). CF(0) has three main subunits: a, b and c.</text>
</comment>
<comment type="subcellular location">
    <subcellularLocation>
        <location evidence="1">Cell inner membrane</location>
        <topology evidence="1">Peripheral membrane protein</topology>
    </subcellularLocation>
</comment>
<comment type="similarity">
    <text evidence="1">Belongs to the ATPase epsilon chain family.</text>
</comment>
<feature type="chain" id="PRO_0000265849" description="ATP synthase epsilon chain">
    <location>
        <begin position="1"/>
        <end position="139"/>
    </location>
</feature>
<organism>
    <name type="scientific">Nitrosospira multiformis (strain ATCC 25196 / NCIMB 11849 / C 71)</name>
    <dbReference type="NCBI Taxonomy" id="323848"/>
    <lineage>
        <taxon>Bacteria</taxon>
        <taxon>Pseudomonadati</taxon>
        <taxon>Pseudomonadota</taxon>
        <taxon>Betaproteobacteria</taxon>
        <taxon>Nitrosomonadales</taxon>
        <taxon>Nitrosomonadaceae</taxon>
        <taxon>Nitrosospira</taxon>
    </lineage>
</organism>
<proteinExistence type="inferred from homology"/>
<evidence type="ECO:0000255" key="1">
    <source>
        <dbReference type="HAMAP-Rule" id="MF_00530"/>
    </source>
</evidence>
<protein>
    <recommendedName>
        <fullName evidence="1">ATP synthase epsilon chain</fullName>
    </recommendedName>
    <alternativeName>
        <fullName evidence="1">ATP synthase F1 sector epsilon subunit</fullName>
    </alternativeName>
    <alternativeName>
        <fullName evidence="1">F-ATPase epsilon subunit</fullName>
    </alternativeName>
</protein>
<accession>Q2YCA2</accession>
<dbReference type="EMBL" id="CP000103">
    <property type="protein sequence ID" value="ABB73619.1"/>
    <property type="molecule type" value="Genomic_DNA"/>
</dbReference>
<dbReference type="RefSeq" id="WP_011379673.1">
    <property type="nucleotide sequence ID" value="NC_007614.1"/>
</dbReference>
<dbReference type="SMR" id="Q2YCA2"/>
<dbReference type="STRING" id="323848.Nmul_A0311"/>
<dbReference type="KEGG" id="nmu:Nmul_A0311"/>
<dbReference type="eggNOG" id="COG0355">
    <property type="taxonomic scope" value="Bacteria"/>
</dbReference>
<dbReference type="HOGENOM" id="CLU_084338_2_0_4"/>
<dbReference type="OrthoDB" id="9791445at2"/>
<dbReference type="Proteomes" id="UP000002718">
    <property type="component" value="Chromosome"/>
</dbReference>
<dbReference type="GO" id="GO:0005886">
    <property type="term" value="C:plasma membrane"/>
    <property type="evidence" value="ECO:0007669"/>
    <property type="project" value="UniProtKB-SubCell"/>
</dbReference>
<dbReference type="GO" id="GO:0045259">
    <property type="term" value="C:proton-transporting ATP synthase complex"/>
    <property type="evidence" value="ECO:0007669"/>
    <property type="project" value="UniProtKB-KW"/>
</dbReference>
<dbReference type="GO" id="GO:0005524">
    <property type="term" value="F:ATP binding"/>
    <property type="evidence" value="ECO:0007669"/>
    <property type="project" value="UniProtKB-UniRule"/>
</dbReference>
<dbReference type="GO" id="GO:0046933">
    <property type="term" value="F:proton-transporting ATP synthase activity, rotational mechanism"/>
    <property type="evidence" value="ECO:0007669"/>
    <property type="project" value="UniProtKB-UniRule"/>
</dbReference>
<dbReference type="CDD" id="cd12152">
    <property type="entry name" value="F1-ATPase_delta"/>
    <property type="match status" value="1"/>
</dbReference>
<dbReference type="FunFam" id="2.60.15.10:FF:000001">
    <property type="entry name" value="ATP synthase epsilon chain"/>
    <property type="match status" value="1"/>
</dbReference>
<dbReference type="Gene3D" id="1.20.5.440">
    <property type="entry name" value="ATP synthase delta/epsilon subunit, C-terminal domain"/>
    <property type="match status" value="1"/>
</dbReference>
<dbReference type="Gene3D" id="2.60.15.10">
    <property type="entry name" value="F0F1 ATP synthase delta/epsilon subunit, N-terminal"/>
    <property type="match status" value="1"/>
</dbReference>
<dbReference type="HAMAP" id="MF_00530">
    <property type="entry name" value="ATP_synth_epsil_bac"/>
    <property type="match status" value="1"/>
</dbReference>
<dbReference type="InterPro" id="IPR036794">
    <property type="entry name" value="ATP_F1_dsu/esu_C_sf"/>
</dbReference>
<dbReference type="InterPro" id="IPR001469">
    <property type="entry name" value="ATP_synth_F1_dsu/esu"/>
</dbReference>
<dbReference type="InterPro" id="IPR020546">
    <property type="entry name" value="ATP_synth_F1_dsu/esu_N"/>
</dbReference>
<dbReference type="InterPro" id="IPR020547">
    <property type="entry name" value="ATP_synth_F1_esu_C"/>
</dbReference>
<dbReference type="InterPro" id="IPR036771">
    <property type="entry name" value="ATPsynth_dsu/esu_N"/>
</dbReference>
<dbReference type="NCBIfam" id="TIGR01216">
    <property type="entry name" value="ATP_synt_epsi"/>
    <property type="match status" value="1"/>
</dbReference>
<dbReference type="NCBIfam" id="NF001847">
    <property type="entry name" value="PRK00571.1-4"/>
    <property type="match status" value="1"/>
</dbReference>
<dbReference type="PANTHER" id="PTHR13822">
    <property type="entry name" value="ATP SYNTHASE DELTA/EPSILON CHAIN"/>
    <property type="match status" value="1"/>
</dbReference>
<dbReference type="PANTHER" id="PTHR13822:SF10">
    <property type="entry name" value="ATP SYNTHASE EPSILON CHAIN, CHLOROPLASTIC"/>
    <property type="match status" value="1"/>
</dbReference>
<dbReference type="Pfam" id="PF00401">
    <property type="entry name" value="ATP-synt_DE"/>
    <property type="match status" value="1"/>
</dbReference>
<dbReference type="Pfam" id="PF02823">
    <property type="entry name" value="ATP-synt_DE_N"/>
    <property type="match status" value="1"/>
</dbReference>
<dbReference type="SUPFAM" id="SSF46604">
    <property type="entry name" value="Epsilon subunit of F1F0-ATP synthase C-terminal domain"/>
    <property type="match status" value="1"/>
</dbReference>
<dbReference type="SUPFAM" id="SSF51344">
    <property type="entry name" value="Epsilon subunit of F1F0-ATP synthase N-terminal domain"/>
    <property type="match status" value="1"/>
</dbReference>
<keyword id="KW-0066">ATP synthesis</keyword>
<keyword id="KW-0997">Cell inner membrane</keyword>
<keyword id="KW-1003">Cell membrane</keyword>
<keyword id="KW-0139">CF(1)</keyword>
<keyword id="KW-0375">Hydrogen ion transport</keyword>
<keyword id="KW-0406">Ion transport</keyword>
<keyword id="KW-0472">Membrane</keyword>
<keyword id="KW-1185">Reference proteome</keyword>
<keyword id="KW-0813">Transport</keyword>
<gene>
    <name evidence="1" type="primary">atpC</name>
    <name type="ordered locus">Nmul_A0311</name>
</gene>
<reference key="1">
    <citation type="submission" date="2005-08" db="EMBL/GenBank/DDBJ databases">
        <title>Complete sequence of chromosome 1 of Nitrosospira multiformis ATCC 25196.</title>
        <authorList>
            <person name="Copeland A."/>
            <person name="Lucas S."/>
            <person name="Lapidus A."/>
            <person name="Barry K."/>
            <person name="Detter J.C."/>
            <person name="Glavina T."/>
            <person name="Hammon N."/>
            <person name="Israni S."/>
            <person name="Pitluck S."/>
            <person name="Chain P."/>
            <person name="Malfatti S."/>
            <person name="Shin M."/>
            <person name="Vergez L."/>
            <person name="Schmutz J."/>
            <person name="Larimer F."/>
            <person name="Land M."/>
            <person name="Hauser L."/>
            <person name="Kyrpides N."/>
            <person name="Lykidis A."/>
            <person name="Richardson P."/>
        </authorList>
    </citation>
    <scope>NUCLEOTIDE SEQUENCE [LARGE SCALE GENOMIC DNA]</scope>
    <source>
        <strain>ATCC 25196 / NCIMB 11849 / C 71</strain>
    </source>
</reference>